<dbReference type="EMBL" id="AY724906">
    <property type="protein sequence ID" value="AAU21117.1"/>
    <property type="molecule type" value="Genomic_DNA"/>
</dbReference>
<dbReference type="RefSeq" id="XP_004052767.2">
    <property type="nucleotide sequence ID" value="XM_004052719.4"/>
</dbReference>
<dbReference type="SMR" id="Q646A2"/>
<dbReference type="FunCoup" id="Q646A2">
    <property type="interactions" value="218"/>
</dbReference>
<dbReference type="STRING" id="9593.ENSGGOP00000023970"/>
<dbReference type="GlyCosmos" id="Q646A2">
    <property type="glycosylation" value="2 sites, No reported glycans"/>
</dbReference>
<dbReference type="GeneID" id="101131413"/>
<dbReference type="eggNOG" id="ENOG502SKRK">
    <property type="taxonomic scope" value="Eukaryota"/>
</dbReference>
<dbReference type="InParanoid" id="Q646A2"/>
<dbReference type="Proteomes" id="UP000001519">
    <property type="component" value="Unplaced"/>
</dbReference>
<dbReference type="GO" id="GO:0016020">
    <property type="term" value="C:membrane"/>
    <property type="evidence" value="ECO:0000318"/>
    <property type="project" value="GO_Central"/>
</dbReference>
<dbReference type="GO" id="GO:0005886">
    <property type="term" value="C:plasma membrane"/>
    <property type="evidence" value="ECO:0007669"/>
    <property type="project" value="UniProtKB-ARBA"/>
</dbReference>
<dbReference type="GO" id="GO:0033038">
    <property type="term" value="F:bitter taste receptor activity"/>
    <property type="evidence" value="ECO:0000318"/>
    <property type="project" value="GO_Central"/>
</dbReference>
<dbReference type="GO" id="GO:0004930">
    <property type="term" value="F:G protein-coupled receptor activity"/>
    <property type="evidence" value="ECO:0007669"/>
    <property type="project" value="UniProtKB-KW"/>
</dbReference>
<dbReference type="GO" id="GO:0001580">
    <property type="term" value="P:detection of chemical stimulus involved in sensory perception of bitter taste"/>
    <property type="evidence" value="ECO:0000318"/>
    <property type="project" value="GO_Central"/>
</dbReference>
<dbReference type="CDD" id="cd15023">
    <property type="entry name" value="7tm_TAS2R7-like"/>
    <property type="match status" value="1"/>
</dbReference>
<dbReference type="FunFam" id="1.20.1070.10:FF:000042">
    <property type="entry name" value="Taste receptor type 2 member 7"/>
    <property type="match status" value="1"/>
</dbReference>
<dbReference type="Gene3D" id="1.20.1070.10">
    <property type="entry name" value="Rhodopsin 7-helix transmembrane proteins"/>
    <property type="match status" value="1"/>
</dbReference>
<dbReference type="InterPro" id="IPR017452">
    <property type="entry name" value="GPCR_Rhodpsn_7TM"/>
</dbReference>
<dbReference type="InterPro" id="IPR007960">
    <property type="entry name" value="TAS2R"/>
</dbReference>
<dbReference type="PANTHER" id="PTHR11394">
    <property type="entry name" value="TASTE RECEPTOR TYPE 2"/>
    <property type="match status" value="1"/>
</dbReference>
<dbReference type="PANTHER" id="PTHR11394:SF58">
    <property type="entry name" value="TASTE RECEPTOR TYPE 2 MEMBER 7"/>
    <property type="match status" value="1"/>
</dbReference>
<dbReference type="Pfam" id="PF05296">
    <property type="entry name" value="TAS2R"/>
    <property type="match status" value="1"/>
</dbReference>
<dbReference type="SUPFAM" id="SSF81321">
    <property type="entry name" value="Family A G protein-coupled receptor-like"/>
    <property type="match status" value="1"/>
</dbReference>
<dbReference type="PROSITE" id="PS50262">
    <property type="entry name" value="G_PROTEIN_RECEP_F1_2"/>
    <property type="match status" value="1"/>
</dbReference>
<sequence>MADKVQTTLLFLAVGEFSVGILGNAFIGLVNCMDWVKKRKIASIDLILTSLAISRICLLCIILLDCFTLVLYPDVYATGKEMRIIDFFWTLTNHLSIWFATCLSIYYFFKIGNFFHPLFLWMKWRIDRVISWILLGCVVLSVFISLPATENLNADFRFCVKAKRKTNLTWSCRVNKTQHASTKLFLNLATLLPFCVCLMSFFLLILSLRRHIRRMQLSATGCRDPSTEAHVRALKAVISFLLLFIAYYLSFLIATSSYFMPETELAVIFGESIALIYPSSHSFILILGNNKLRYVSLKVIWKVMSILKGRKFQQHKQI</sequence>
<evidence type="ECO:0000250" key="1"/>
<evidence type="ECO:0000255" key="2"/>
<evidence type="ECO:0000305" key="3"/>
<gene>
    <name type="primary">TAS2R7</name>
</gene>
<keyword id="KW-0297">G-protein coupled receptor</keyword>
<keyword id="KW-0325">Glycoprotein</keyword>
<keyword id="KW-0472">Membrane</keyword>
<keyword id="KW-0675">Receptor</keyword>
<keyword id="KW-1185">Reference proteome</keyword>
<keyword id="KW-0716">Sensory transduction</keyword>
<keyword id="KW-0919">Taste</keyword>
<keyword id="KW-0807">Transducer</keyword>
<keyword id="KW-0812">Transmembrane</keyword>
<keyword id="KW-1133">Transmembrane helix</keyword>
<feature type="chain" id="PRO_0000082219" description="Taste receptor type 2 member 7">
    <location>
        <begin position="1"/>
        <end position="318"/>
    </location>
</feature>
<feature type="topological domain" description="Extracellular" evidence="2">
    <location>
        <begin position="1"/>
        <end position="9"/>
    </location>
</feature>
<feature type="transmembrane region" description="Helical; Name=1" evidence="2">
    <location>
        <begin position="10"/>
        <end position="30"/>
    </location>
</feature>
<feature type="topological domain" description="Cytoplasmic" evidence="2">
    <location>
        <begin position="31"/>
        <end position="55"/>
    </location>
</feature>
<feature type="transmembrane region" description="Helical; Name=2" evidence="2">
    <location>
        <begin position="56"/>
        <end position="76"/>
    </location>
</feature>
<feature type="topological domain" description="Extracellular" evidence="2">
    <location>
        <begin position="77"/>
        <end position="94"/>
    </location>
</feature>
<feature type="transmembrane region" description="Helical; Name=3" evidence="2">
    <location>
        <begin position="95"/>
        <end position="115"/>
    </location>
</feature>
<feature type="topological domain" description="Cytoplasmic" evidence="2">
    <location>
        <begin position="116"/>
        <end position="128"/>
    </location>
</feature>
<feature type="transmembrane region" description="Helical; Name=4" evidence="2">
    <location>
        <begin position="129"/>
        <end position="149"/>
    </location>
</feature>
<feature type="topological domain" description="Extracellular" evidence="2">
    <location>
        <begin position="150"/>
        <end position="187"/>
    </location>
</feature>
<feature type="transmembrane region" description="Helical; Name=5" evidence="2">
    <location>
        <begin position="188"/>
        <end position="208"/>
    </location>
</feature>
<feature type="topological domain" description="Cytoplasmic" evidence="2">
    <location>
        <begin position="209"/>
        <end position="235"/>
    </location>
</feature>
<feature type="transmembrane region" description="Helical; Name=6" evidence="2">
    <location>
        <begin position="236"/>
        <end position="256"/>
    </location>
</feature>
<feature type="topological domain" description="Extracellular" evidence="2">
    <location>
        <begin position="257"/>
        <end position="266"/>
    </location>
</feature>
<feature type="transmembrane region" description="Helical; Name=7" evidence="2">
    <location>
        <begin position="267"/>
        <end position="287"/>
    </location>
</feature>
<feature type="topological domain" description="Cytoplasmic" evidence="2">
    <location>
        <begin position="288"/>
        <end position="318"/>
    </location>
</feature>
<feature type="glycosylation site" description="N-linked (GlcNAc...) asparagine" evidence="2">
    <location>
        <position position="167"/>
    </location>
</feature>
<feature type="glycosylation site" description="N-linked (GlcNAc...) asparagine" evidence="2">
    <location>
        <position position="175"/>
    </location>
</feature>
<comment type="function">
    <text evidence="1">Gustducin-coupled receptor implicated in the perception of bitter compounds in the oral cavity and the gastrointestinal tract. Signals through PLCB2 and the calcium-regulated cation channel TRPM5 (By similarity).</text>
</comment>
<comment type="subcellular location">
    <subcellularLocation>
        <location>Membrane</location>
        <topology>Multi-pass membrane protein</topology>
    </subcellularLocation>
</comment>
<comment type="miscellaneous">
    <text>Several bitter taste receptors are expressed in a single taste receptor cell.</text>
</comment>
<comment type="similarity">
    <text evidence="3">Belongs to the G-protein coupled receptor T2R family.</text>
</comment>
<name>TA2R7_GORGO</name>
<protein>
    <recommendedName>
        <fullName>Taste receptor type 2 member 7</fullName>
        <shortName>T2R7</shortName>
    </recommendedName>
</protein>
<proteinExistence type="inferred from homology"/>
<reference key="1">
    <citation type="journal article" date="2005" name="Mol. Biol. Evol.">
        <title>Evolution of bitter taste receptors in humans and apes.</title>
        <authorList>
            <person name="Fischer A."/>
            <person name="Gilad Y."/>
            <person name="Man O."/>
            <person name="Paeaebo S."/>
        </authorList>
    </citation>
    <scope>NUCLEOTIDE SEQUENCE [GENOMIC DNA]</scope>
</reference>
<accession>Q646A2</accession>
<organism>
    <name type="scientific">Gorilla gorilla gorilla</name>
    <name type="common">Western lowland gorilla</name>
    <dbReference type="NCBI Taxonomy" id="9595"/>
    <lineage>
        <taxon>Eukaryota</taxon>
        <taxon>Metazoa</taxon>
        <taxon>Chordata</taxon>
        <taxon>Craniata</taxon>
        <taxon>Vertebrata</taxon>
        <taxon>Euteleostomi</taxon>
        <taxon>Mammalia</taxon>
        <taxon>Eutheria</taxon>
        <taxon>Euarchontoglires</taxon>
        <taxon>Primates</taxon>
        <taxon>Haplorrhini</taxon>
        <taxon>Catarrhini</taxon>
        <taxon>Hominidae</taxon>
        <taxon>Gorilla</taxon>
    </lineage>
</organism>